<keyword id="KW-0240">DNA-directed RNA polymerase</keyword>
<keyword id="KW-0548">Nucleotidyltransferase</keyword>
<keyword id="KW-1185">Reference proteome</keyword>
<keyword id="KW-0804">Transcription</keyword>
<keyword id="KW-0808">Transferase</keyword>
<comment type="function">
    <text evidence="1">DNA-dependent RNA polymerase catalyzes the transcription of DNA into RNA using the four ribonucleoside triphosphates as substrates.</text>
</comment>
<comment type="catalytic activity">
    <reaction evidence="1">
        <text>RNA(n) + a ribonucleoside 5'-triphosphate = RNA(n+1) + diphosphate</text>
        <dbReference type="Rhea" id="RHEA:21248"/>
        <dbReference type="Rhea" id="RHEA-COMP:14527"/>
        <dbReference type="Rhea" id="RHEA-COMP:17342"/>
        <dbReference type="ChEBI" id="CHEBI:33019"/>
        <dbReference type="ChEBI" id="CHEBI:61557"/>
        <dbReference type="ChEBI" id="CHEBI:140395"/>
        <dbReference type="EC" id="2.7.7.6"/>
    </reaction>
</comment>
<comment type="subunit">
    <text evidence="1">Homodimer. The RNAP catalytic core consists of 2 alpha, 1 beta, 1 beta' and 1 omega subunit. When a sigma factor is associated with the core the holoenzyme is formed, which can initiate transcription.</text>
</comment>
<comment type="domain">
    <text evidence="1">The N-terminal domain is essential for RNAP assembly and basal transcription, whereas the C-terminal domain is involved in interaction with transcriptional regulators and with upstream promoter elements.</text>
</comment>
<comment type="similarity">
    <text evidence="1">Belongs to the RNA polymerase alpha chain family.</text>
</comment>
<gene>
    <name evidence="1" type="primary">rpoA</name>
    <name type="ordered locus">Plut_0207</name>
</gene>
<dbReference type="EC" id="2.7.7.6" evidence="1"/>
<dbReference type="EMBL" id="CP000096">
    <property type="protein sequence ID" value="ABB23095.1"/>
    <property type="molecule type" value="Genomic_DNA"/>
</dbReference>
<dbReference type="RefSeq" id="WP_011356970.1">
    <property type="nucleotide sequence ID" value="NC_007512.1"/>
</dbReference>
<dbReference type="SMR" id="Q3B6D6"/>
<dbReference type="STRING" id="319225.Plut_0207"/>
<dbReference type="KEGG" id="plt:Plut_0207"/>
<dbReference type="eggNOG" id="COG0202">
    <property type="taxonomic scope" value="Bacteria"/>
</dbReference>
<dbReference type="HOGENOM" id="CLU_053084_0_1_10"/>
<dbReference type="OrthoDB" id="9805706at2"/>
<dbReference type="Proteomes" id="UP000002709">
    <property type="component" value="Chromosome"/>
</dbReference>
<dbReference type="GO" id="GO:0005737">
    <property type="term" value="C:cytoplasm"/>
    <property type="evidence" value="ECO:0007669"/>
    <property type="project" value="UniProtKB-ARBA"/>
</dbReference>
<dbReference type="GO" id="GO:0000428">
    <property type="term" value="C:DNA-directed RNA polymerase complex"/>
    <property type="evidence" value="ECO:0007669"/>
    <property type="project" value="UniProtKB-KW"/>
</dbReference>
<dbReference type="GO" id="GO:0003677">
    <property type="term" value="F:DNA binding"/>
    <property type="evidence" value="ECO:0007669"/>
    <property type="project" value="UniProtKB-UniRule"/>
</dbReference>
<dbReference type="GO" id="GO:0003899">
    <property type="term" value="F:DNA-directed RNA polymerase activity"/>
    <property type="evidence" value="ECO:0007669"/>
    <property type="project" value="UniProtKB-UniRule"/>
</dbReference>
<dbReference type="GO" id="GO:0046983">
    <property type="term" value="F:protein dimerization activity"/>
    <property type="evidence" value="ECO:0007669"/>
    <property type="project" value="InterPro"/>
</dbReference>
<dbReference type="GO" id="GO:0006351">
    <property type="term" value="P:DNA-templated transcription"/>
    <property type="evidence" value="ECO:0007669"/>
    <property type="project" value="UniProtKB-UniRule"/>
</dbReference>
<dbReference type="CDD" id="cd06928">
    <property type="entry name" value="RNAP_alpha_NTD"/>
    <property type="match status" value="1"/>
</dbReference>
<dbReference type="FunFam" id="2.170.120.12:FF:000001">
    <property type="entry name" value="DNA-directed RNA polymerase subunit alpha"/>
    <property type="match status" value="1"/>
</dbReference>
<dbReference type="Gene3D" id="1.10.150.20">
    <property type="entry name" value="5' to 3' exonuclease, C-terminal subdomain"/>
    <property type="match status" value="1"/>
</dbReference>
<dbReference type="Gene3D" id="2.170.120.12">
    <property type="entry name" value="DNA-directed RNA polymerase, insert domain"/>
    <property type="match status" value="1"/>
</dbReference>
<dbReference type="Gene3D" id="3.30.1360.10">
    <property type="entry name" value="RNA polymerase, RBP11-like subunit"/>
    <property type="match status" value="1"/>
</dbReference>
<dbReference type="HAMAP" id="MF_00059">
    <property type="entry name" value="RNApol_bact_RpoA"/>
    <property type="match status" value="1"/>
</dbReference>
<dbReference type="InterPro" id="IPR011262">
    <property type="entry name" value="DNA-dir_RNA_pol_insert"/>
</dbReference>
<dbReference type="InterPro" id="IPR011263">
    <property type="entry name" value="DNA-dir_RNA_pol_RpoA/D/Rpb3"/>
</dbReference>
<dbReference type="InterPro" id="IPR011773">
    <property type="entry name" value="DNA-dir_RpoA"/>
</dbReference>
<dbReference type="InterPro" id="IPR036603">
    <property type="entry name" value="RBP11-like"/>
</dbReference>
<dbReference type="InterPro" id="IPR011260">
    <property type="entry name" value="RNAP_asu_C"/>
</dbReference>
<dbReference type="InterPro" id="IPR036643">
    <property type="entry name" value="RNApol_insert_sf"/>
</dbReference>
<dbReference type="NCBIfam" id="NF003513">
    <property type="entry name" value="PRK05182.1-2"/>
    <property type="match status" value="1"/>
</dbReference>
<dbReference type="NCBIfam" id="NF003519">
    <property type="entry name" value="PRK05182.2-5"/>
    <property type="match status" value="1"/>
</dbReference>
<dbReference type="NCBIfam" id="TIGR02027">
    <property type="entry name" value="rpoA"/>
    <property type="match status" value="1"/>
</dbReference>
<dbReference type="Pfam" id="PF01000">
    <property type="entry name" value="RNA_pol_A_bac"/>
    <property type="match status" value="1"/>
</dbReference>
<dbReference type="Pfam" id="PF03118">
    <property type="entry name" value="RNA_pol_A_CTD"/>
    <property type="match status" value="1"/>
</dbReference>
<dbReference type="Pfam" id="PF01193">
    <property type="entry name" value="RNA_pol_L"/>
    <property type="match status" value="1"/>
</dbReference>
<dbReference type="SMART" id="SM00662">
    <property type="entry name" value="RPOLD"/>
    <property type="match status" value="1"/>
</dbReference>
<dbReference type="SUPFAM" id="SSF47789">
    <property type="entry name" value="C-terminal domain of RNA polymerase alpha subunit"/>
    <property type="match status" value="1"/>
</dbReference>
<dbReference type="SUPFAM" id="SSF56553">
    <property type="entry name" value="Insert subdomain of RNA polymerase alpha subunit"/>
    <property type="match status" value="1"/>
</dbReference>
<dbReference type="SUPFAM" id="SSF55257">
    <property type="entry name" value="RBP11-like subunits of RNA polymerase"/>
    <property type="match status" value="1"/>
</dbReference>
<name>RPOA_CHLL3</name>
<accession>Q3B6D6</accession>
<proteinExistence type="inferred from homology"/>
<sequence length="328" mass="37248">MIYQMQMPAKIEVDEATHTDQYGRFIAQPLERGYGVTLGNMMRRVLLASLPGTAITGIKVDGVFHEFSSIEGVREDVPEIVLNLKKVRFKSTCKRSCKTTLSIVGPKDFTAGDIVAQEGEFEVLNKDLYIATVNEGSTLNIDVYIGRGRGYTPAEESRPDSMPIGYIAIDAIYTPIRNVKFAVENTRVGQRTDYEKMVLDVETDGSITPDDSISLAGRIINEHVTFFANFSPTEEEFTEEEYKQQDDEFETMRRLLNTKIEDLDLSVRSHNCLRLAEIDTIGDLVSRKEDELLNYKNFGKKSLTELKEQLEKFELKFGMDITRYQMKG</sequence>
<reference key="1">
    <citation type="submission" date="2005-08" db="EMBL/GenBank/DDBJ databases">
        <title>Complete sequence of Pelodictyon luteolum DSM 273.</title>
        <authorList>
            <consortium name="US DOE Joint Genome Institute"/>
            <person name="Copeland A."/>
            <person name="Lucas S."/>
            <person name="Lapidus A."/>
            <person name="Barry K."/>
            <person name="Detter J.C."/>
            <person name="Glavina T."/>
            <person name="Hammon N."/>
            <person name="Israni S."/>
            <person name="Pitluck S."/>
            <person name="Bryant D."/>
            <person name="Schmutz J."/>
            <person name="Larimer F."/>
            <person name="Land M."/>
            <person name="Kyrpides N."/>
            <person name="Ivanova N."/>
            <person name="Richardson P."/>
        </authorList>
    </citation>
    <scope>NUCLEOTIDE SEQUENCE [LARGE SCALE GENOMIC DNA]</scope>
    <source>
        <strain>DSM 273 / BCRC 81028 / 2530</strain>
    </source>
</reference>
<feature type="chain" id="PRO_0000264524" description="DNA-directed RNA polymerase subunit alpha">
    <location>
        <begin position="1"/>
        <end position="328"/>
    </location>
</feature>
<feature type="region of interest" description="Alpha N-terminal domain (alpha-NTD)" evidence="1">
    <location>
        <begin position="1"/>
        <end position="231"/>
    </location>
</feature>
<feature type="region of interest" description="Alpha C-terminal domain (alpha-CTD)" evidence="1">
    <location>
        <begin position="247"/>
        <end position="328"/>
    </location>
</feature>
<protein>
    <recommendedName>
        <fullName evidence="1">DNA-directed RNA polymerase subunit alpha</fullName>
        <shortName evidence="1">RNAP subunit alpha</shortName>
        <ecNumber evidence="1">2.7.7.6</ecNumber>
    </recommendedName>
    <alternativeName>
        <fullName evidence="1">RNA polymerase subunit alpha</fullName>
    </alternativeName>
    <alternativeName>
        <fullName evidence="1">Transcriptase subunit alpha</fullName>
    </alternativeName>
</protein>
<organism>
    <name type="scientific">Chlorobium luteolum (strain DSM 273 / BCRC 81028 / 2530)</name>
    <name type="common">Pelodictyon luteolum</name>
    <dbReference type="NCBI Taxonomy" id="319225"/>
    <lineage>
        <taxon>Bacteria</taxon>
        <taxon>Pseudomonadati</taxon>
        <taxon>Chlorobiota</taxon>
        <taxon>Chlorobiia</taxon>
        <taxon>Chlorobiales</taxon>
        <taxon>Chlorobiaceae</taxon>
        <taxon>Chlorobium/Pelodictyon group</taxon>
        <taxon>Pelodictyon</taxon>
    </lineage>
</organism>
<evidence type="ECO:0000255" key="1">
    <source>
        <dbReference type="HAMAP-Rule" id="MF_00059"/>
    </source>
</evidence>